<proteinExistence type="inferred from homology"/>
<feature type="chain" id="PRO_0000331367" description="DNA excision repair protein ERCC-1">
    <location>
        <begin position="1"/>
        <end position="514"/>
    </location>
</feature>
<feature type="region of interest" description="Disordered" evidence="2">
    <location>
        <begin position="1"/>
        <end position="52"/>
    </location>
</feature>
<feature type="region of interest" description="Disordered" evidence="2">
    <location>
        <begin position="426"/>
        <end position="514"/>
    </location>
</feature>
<feature type="compositionally biased region" description="Low complexity" evidence="2">
    <location>
        <begin position="1"/>
        <end position="47"/>
    </location>
</feature>
<feature type="compositionally biased region" description="Low complexity" evidence="2">
    <location>
        <begin position="429"/>
        <end position="476"/>
    </location>
</feature>
<reference key="1">
    <citation type="journal article" date="2005" name="Nature">
        <title>The genome of the social amoeba Dictyostelium discoideum.</title>
        <authorList>
            <person name="Eichinger L."/>
            <person name="Pachebat J.A."/>
            <person name="Gloeckner G."/>
            <person name="Rajandream M.A."/>
            <person name="Sucgang R."/>
            <person name="Berriman M."/>
            <person name="Song J."/>
            <person name="Olsen R."/>
            <person name="Szafranski K."/>
            <person name="Xu Q."/>
            <person name="Tunggal B."/>
            <person name="Kummerfeld S."/>
            <person name="Madera M."/>
            <person name="Konfortov B.A."/>
            <person name="Rivero F."/>
            <person name="Bankier A.T."/>
            <person name="Lehmann R."/>
            <person name="Hamlin N."/>
            <person name="Davies R."/>
            <person name="Gaudet P."/>
            <person name="Fey P."/>
            <person name="Pilcher K."/>
            <person name="Chen G."/>
            <person name="Saunders D."/>
            <person name="Sodergren E.J."/>
            <person name="Davis P."/>
            <person name="Kerhornou A."/>
            <person name="Nie X."/>
            <person name="Hall N."/>
            <person name="Anjard C."/>
            <person name="Hemphill L."/>
            <person name="Bason N."/>
            <person name="Farbrother P."/>
            <person name="Desany B."/>
            <person name="Just E."/>
            <person name="Morio T."/>
            <person name="Rost R."/>
            <person name="Churcher C.M."/>
            <person name="Cooper J."/>
            <person name="Haydock S."/>
            <person name="van Driessche N."/>
            <person name="Cronin A."/>
            <person name="Goodhead I."/>
            <person name="Muzny D.M."/>
            <person name="Mourier T."/>
            <person name="Pain A."/>
            <person name="Lu M."/>
            <person name="Harper D."/>
            <person name="Lindsay R."/>
            <person name="Hauser H."/>
            <person name="James K.D."/>
            <person name="Quiles M."/>
            <person name="Madan Babu M."/>
            <person name="Saito T."/>
            <person name="Buchrieser C."/>
            <person name="Wardroper A."/>
            <person name="Felder M."/>
            <person name="Thangavelu M."/>
            <person name="Johnson D."/>
            <person name="Knights A."/>
            <person name="Loulseged H."/>
            <person name="Mungall K.L."/>
            <person name="Oliver K."/>
            <person name="Price C."/>
            <person name="Quail M.A."/>
            <person name="Urushihara H."/>
            <person name="Hernandez J."/>
            <person name="Rabbinowitsch E."/>
            <person name="Steffen D."/>
            <person name="Sanders M."/>
            <person name="Ma J."/>
            <person name="Kohara Y."/>
            <person name="Sharp S."/>
            <person name="Simmonds M.N."/>
            <person name="Spiegler S."/>
            <person name="Tivey A."/>
            <person name="Sugano S."/>
            <person name="White B."/>
            <person name="Walker D."/>
            <person name="Woodward J.R."/>
            <person name="Winckler T."/>
            <person name="Tanaka Y."/>
            <person name="Shaulsky G."/>
            <person name="Schleicher M."/>
            <person name="Weinstock G.M."/>
            <person name="Rosenthal A."/>
            <person name="Cox E.C."/>
            <person name="Chisholm R.L."/>
            <person name="Gibbs R.A."/>
            <person name="Loomis W.F."/>
            <person name="Platzer M."/>
            <person name="Kay R.R."/>
            <person name="Williams J.G."/>
            <person name="Dear P.H."/>
            <person name="Noegel A.A."/>
            <person name="Barrell B.G."/>
            <person name="Kuspa A."/>
        </authorList>
    </citation>
    <scope>NUCLEOTIDE SEQUENCE [LARGE SCALE GENOMIC DNA]</scope>
    <source>
        <strain>AX4</strain>
    </source>
</reference>
<keyword id="KW-0227">DNA damage</keyword>
<keyword id="KW-0234">DNA repair</keyword>
<keyword id="KW-0238">DNA-binding</keyword>
<keyword id="KW-0255">Endonuclease</keyword>
<keyword id="KW-0378">Hydrolase</keyword>
<keyword id="KW-0540">Nuclease</keyword>
<keyword id="KW-0539">Nucleus</keyword>
<keyword id="KW-1185">Reference proteome</keyword>
<name>ERCC1_DICDI</name>
<gene>
    <name type="primary">ercc1</name>
    <name type="ORF">DDB_G0267682</name>
</gene>
<protein>
    <recommendedName>
        <fullName>DNA excision repair protein ERCC-1</fullName>
    </recommendedName>
</protein>
<dbReference type="EMBL" id="AAFI02000003">
    <property type="protein sequence ID" value="EAL73294.1"/>
    <property type="molecule type" value="Genomic_DNA"/>
</dbReference>
<dbReference type="RefSeq" id="XP_647218.1">
    <property type="nucleotide sequence ID" value="XM_642126.1"/>
</dbReference>
<dbReference type="SMR" id="Q55GG6"/>
<dbReference type="STRING" id="44689.Q55GG6"/>
<dbReference type="PaxDb" id="44689-DDB0232362"/>
<dbReference type="EnsemblProtists" id="EAL73294">
    <property type="protein sequence ID" value="EAL73294"/>
    <property type="gene ID" value="DDB_G0267682"/>
</dbReference>
<dbReference type="GeneID" id="8616022"/>
<dbReference type="KEGG" id="ddi:DDB_G0267682"/>
<dbReference type="dictyBase" id="DDB_G0267682">
    <property type="gene designation" value="ercc1"/>
</dbReference>
<dbReference type="VEuPathDB" id="AmoebaDB:DDB_G0267682"/>
<dbReference type="eggNOG" id="KOG2841">
    <property type="taxonomic scope" value="Eukaryota"/>
</dbReference>
<dbReference type="HOGENOM" id="CLU_530448_0_0_1"/>
<dbReference type="InParanoid" id="Q55GG6"/>
<dbReference type="OMA" id="FTHERAN"/>
<dbReference type="Reactome" id="R-DDI-5696395">
    <property type="pathway name" value="Formation of Incision Complex in GG-NER"/>
</dbReference>
<dbReference type="Reactome" id="R-DDI-6782135">
    <property type="pathway name" value="Dual incision in TC-NER"/>
</dbReference>
<dbReference type="PRO" id="PR:Q55GG6"/>
<dbReference type="Proteomes" id="UP000002195">
    <property type="component" value="Chromosome 1"/>
</dbReference>
<dbReference type="GO" id="GO:0070522">
    <property type="term" value="C:ERCC4-ERCC1 complex"/>
    <property type="evidence" value="ECO:0000318"/>
    <property type="project" value="GO_Central"/>
</dbReference>
<dbReference type="GO" id="GO:0000110">
    <property type="term" value="C:nucleotide-excision repair factor 1 complex"/>
    <property type="evidence" value="ECO:0000250"/>
    <property type="project" value="dictyBase"/>
</dbReference>
<dbReference type="GO" id="GO:0003684">
    <property type="term" value="F:damaged DNA binding"/>
    <property type="evidence" value="ECO:0000318"/>
    <property type="project" value="GO_Central"/>
</dbReference>
<dbReference type="GO" id="GO:0003697">
    <property type="term" value="F:single-stranded DNA binding"/>
    <property type="evidence" value="ECO:0000318"/>
    <property type="project" value="GO_Central"/>
</dbReference>
<dbReference type="GO" id="GO:0000014">
    <property type="term" value="F:single-stranded DNA endodeoxyribonuclease activity"/>
    <property type="evidence" value="ECO:0000250"/>
    <property type="project" value="dictyBase"/>
</dbReference>
<dbReference type="GO" id="GO:0006302">
    <property type="term" value="P:double-strand break repair"/>
    <property type="evidence" value="ECO:0007669"/>
    <property type="project" value="UniProtKB-ARBA"/>
</dbReference>
<dbReference type="GO" id="GO:0006312">
    <property type="term" value="P:mitotic recombination"/>
    <property type="evidence" value="ECO:0000318"/>
    <property type="project" value="GO_Central"/>
</dbReference>
<dbReference type="GO" id="GO:0006289">
    <property type="term" value="P:nucleotide-excision repair"/>
    <property type="evidence" value="ECO:0000250"/>
    <property type="project" value="dictyBase"/>
</dbReference>
<dbReference type="GO" id="GO:0070914">
    <property type="term" value="P:UV-damage excision repair"/>
    <property type="evidence" value="ECO:0000318"/>
    <property type="project" value="GO_Central"/>
</dbReference>
<dbReference type="CDD" id="cd22325">
    <property type="entry name" value="ERCC1_C-like"/>
    <property type="match status" value="1"/>
</dbReference>
<dbReference type="FunFam" id="1.10.150.20:FF:000210">
    <property type="entry name" value="DNA excision repair protein ERCC-1"/>
    <property type="match status" value="1"/>
</dbReference>
<dbReference type="Gene3D" id="3.40.50.10130">
    <property type="match status" value="1"/>
</dbReference>
<dbReference type="Gene3D" id="1.10.150.20">
    <property type="entry name" value="5' to 3' exonuclease, C-terminal subdomain"/>
    <property type="match status" value="1"/>
</dbReference>
<dbReference type="InterPro" id="IPR047260">
    <property type="entry name" value="ERCC1-like_central_dom"/>
</dbReference>
<dbReference type="InterPro" id="IPR004579">
    <property type="entry name" value="ERCC1/RAD10/SWI10"/>
</dbReference>
<dbReference type="InterPro" id="IPR011335">
    <property type="entry name" value="Restrct_endonuc-II-like"/>
</dbReference>
<dbReference type="InterPro" id="IPR010994">
    <property type="entry name" value="RuvA_2-like"/>
</dbReference>
<dbReference type="PANTHER" id="PTHR12749:SF0">
    <property type="entry name" value="DNA EXCISION REPAIR PROTEIN ERCC-1"/>
    <property type="match status" value="1"/>
</dbReference>
<dbReference type="PANTHER" id="PTHR12749">
    <property type="entry name" value="EXCISION REPAIR CROSS-COMPLEMENTING 1 ERCC1"/>
    <property type="match status" value="1"/>
</dbReference>
<dbReference type="Pfam" id="PF03834">
    <property type="entry name" value="Rad10"/>
    <property type="match status" value="1"/>
</dbReference>
<dbReference type="SUPFAM" id="SSF52980">
    <property type="entry name" value="Restriction endonuclease-like"/>
    <property type="match status" value="1"/>
</dbReference>
<dbReference type="SUPFAM" id="SSF47781">
    <property type="entry name" value="RuvA domain 2-like"/>
    <property type="match status" value="1"/>
</dbReference>
<organism>
    <name type="scientific">Dictyostelium discoideum</name>
    <name type="common">Social amoeba</name>
    <dbReference type="NCBI Taxonomy" id="44689"/>
    <lineage>
        <taxon>Eukaryota</taxon>
        <taxon>Amoebozoa</taxon>
        <taxon>Evosea</taxon>
        <taxon>Eumycetozoa</taxon>
        <taxon>Dictyostelia</taxon>
        <taxon>Dictyosteliales</taxon>
        <taxon>Dictyosteliaceae</taxon>
        <taxon>Dictyostelium</taxon>
    </lineage>
</organism>
<sequence length="514" mass="56615">MSSQQTDNNPIPTTTTNNNTNNDNDIASTNNNTNNDDDSTTTNTSTNKPRKRFVIPSASQALKKSDLSMVEINSKLKQAEENAKQAEDLQKSNAIILTPKSTTTMTTTTTPVQQRMPIPSILAKRNVNTTTTTSTSPLSTSPPISSPLQTPYYSPSFVKNPTSPAPINKPIGPSLPMRPSLPKKPAAYSTTLSTYSSSSSSYSSSTTTQNYQHIDKIYANSKQRGSLMMNSFSKNIIIEYSELQYPDFILNSNTLVFYLPSLKTHRDNPNLIQDRIKGLSTLMTNSDSFTLRILLVFADLSDSDNCEQFINELNLIAIKLQFTLIVCWSQIEAAKYLEAYKTFNNRAPDPIKARAQPIELGGKSKNEQVLTSIKSVNKTDATTLLKNFQTMQQIFTCQKTTLSKLPGFGPVKVQKFYNTINQPFKTKPSTKTTTTTTTTTTTTTSANISSNNNNNNINTNDGNNNNNTINNINFNNDENEVDQDPLNFSFDFGGNGNGDGDSDGDGESENQINT</sequence>
<comment type="function">
    <text evidence="1">Structure-specific DNA repair endonuclease responsible for the 5'-incision during DNA repair.</text>
</comment>
<comment type="subunit">
    <text evidence="1">Heterodimer composed of ercc1 and xpf/errc4.</text>
</comment>
<comment type="subcellular location">
    <subcellularLocation>
        <location evidence="1">Nucleus</location>
    </subcellularLocation>
</comment>
<comment type="similarity">
    <text evidence="3">Belongs to the ERCC1/RAD10/SWI10 family.</text>
</comment>
<evidence type="ECO:0000250" key="1"/>
<evidence type="ECO:0000256" key="2">
    <source>
        <dbReference type="SAM" id="MobiDB-lite"/>
    </source>
</evidence>
<evidence type="ECO:0000305" key="3"/>
<accession>Q55GG6</accession>